<feature type="chain" id="PRO_0000166118" description="Retinal rod rhodopsin-sensitive cGMP 3',5'-cyclic phosphodiesterase subunit gamma">
    <location>
        <begin position="1"/>
        <end position="87"/>
    </location>
</feature>
<feature type="region of interest" description="Disordered" evidence="2">
    <location>
        <begin position="1"/>
        <end position="55"/>
    </location>
</feature>
<feature type="compositionally biased region" description="Basic and acidic residues" evidence="2">
    <location>
        <begin position="1"/>
        <end position="12"/>
    </location>
</feature>
<feature type="compositionally biased region" description="Basic residues" evidence="2">
    <location>
        <begin position="26"/>
        <end position="44"/>
    </location>
</feature>
<feature type="modified residue" description="N-acetylmethionine" evidence="1">
    <location>
        <position position="1"/>
    </location>
</feature>
<keyword id="KW-0007">Acetylation</keyword>
<keyword id="KW-0140">cGMP</keyword>
<keyword id="KW-0378">Hydrolase</keyword>
<keyword id="KW-1185">Reference proteome</keyword>
<keyword id="KW-0716">Sensory transduction</keyword>
<keyword id="KW-0844">Vision</keyword>
<dbReference type="EC" id="3.1.4.35"/>
<dbReference type="EMBL" id="Y00746">
    <property type="protein sequence ID" value="CAA68714.1"/>
    <property type="molecule type" value="mRNA"/>
</dbReference>
<dbReference type="EMBL" id="BC082288">
    <property type="protein sequence ID" value="AAH82288.1"/>
    <property type="molecule type" value="mRNA"/>
</dbReference>
<dbReference type="CCDS" id="CCDS36389.1"/>
<dbReference type="PIR" id="S00612">
    <property type="entry name" value="ESMSGM"/>
</dbReference>
<dbReference type="RefSeq" id="NP_036197.1">
    <property type="nucleotide sequence ID" value="NM_012065.3"/>
</dbReference>
<dbReference type="RefSeq" id="XP_006532518.1">
    <property type="nucleotide sequence ID" value="XM_006532455.3"/>
</dbReference>
<dbReference type="BioGRID" id="202085">
    <property type="interactions" value="1"/>
</dbReference>
<dbReference type="CORUM" id="P09174"/>
<dbReference type="FunCoup" id="P09174">
    <property type="interactions" value="289"/>
</dbReference>
<dbReference type="STRING" id="10090.ENSMUSP00000026452"/>
<dbReference type="iPTMnet" id="P09174"/>
<dbReference type="PhosphoSitePlus" id="P09174"/>
<dbReference type="PaxDb" id="10090-ENSMUSP00000026452"/>
<dbReference type="ProteomicsDB" id="283467"/>
<dbReference type="Antibodypedia" id="57116">
    <property type="antibodies" value="139 antibodies from 20 providers"/>
</dbReference>
<dbReference type="DNASU" id="18588"/>
<dbReference type="Ensembl" id="ENSMUST00000026452.3">
    <property type="protein sequence ID" value="ENSMUSP00000026452.3"/>
    <property type="gene ID" value="ENSMUSG00000025386.3"/>
</dbReference>
<dbReference type="GeneID" id="18588"/>
<dbReference type="KEGG" id="mmu:18588"/>
<dbReference type="UCSC" id="uc007mss.2">
    <property type="organism name" value="mouse"/>
</dbReference>
<dbReference type="AGR" id="MGI:97526"/>
<dbReference type="CTD" id="5148"/>
<dbReference type="MGI" id="MGI:97526">
    <property type="gene designation" value="Pde6g"/>
</dbReference>
<dbReference type="VEuPathDB" id="HostDB:ENSMUSG00000025386"/>
<dbReference type="eggNOG" id="ENOG502S20G">
    <property type="taxonomic scope" value="Eukaryota"/>
</dbReference>
<dbReference type="GeneTree" id="ENSGT00390000013260"/>
<dbReference type="HOGENOM" id="CLU_170469_0_0_1"/>
<dbReference type="InParanoid" id="P09174"/>
<dbReference type="OMA" id="KGRGWHP"/>
<dbReference type="OrthoDB" id="8525078at2759"/>
<dbReference type="PhylomeDB" id="P09174"/>
<dbReference type="TreeFam" id="TF333297"/>
<dbReference type="Reactome" id="R-MMU-2485179">
    <property type="pathway name" value="Activation of the phototransduction cascade"/>
</dbReference>
<dbReference type="Reactome" id="R-MMU-2514859">
    <property type="pathway name" value="Inactivation, recovery and regulation of the phototransduction cascade"/>
</dbReference>
<dbReference type="Reactome" id="R-MMU-4086398">
    <property type="pathway name" value="Ca2+ pathway"/>
</dbReference>
<dbReference type="BioGRID-ORCS" id="18588">
    <property type="hits" value="3 hits in 75 CRISPR screens"/>
</dbReference>
<dbReference type="PRO" id="PR:P09174"/>
<dbReference type="Proteomes" id="UP000000589">
    <property type="component" value="Chromosome 11"/>
</dbReference>
<dbReference type="RNAct" id="P09174">
    <property type="molecule type" value="protein"/>
</dbReference>
<dbReference type="Bgee" id="ENSMUSG00000025386">
    <property type="expression patterns" value="Expressed in retinal neural layer and 52 other cell types or tissues"/>
</dbReference>
<dbReference type="ExpressionAtlas" id="P09174">
    <property type="expression patterns" value="baseline and differential"/>
</dbReference>
<dbReference type="GO" id="GO:0005886">
    <property type="term" value="C:plasma membrane"/>
    <property type="evidence" value="ECO:0000304"/>
    <property type="project" value="Reactome"/>
</dbReference>
<dbReference type="GO" id="GO:0047555">
    <property type="term" value="F:3',5'-cyclic-GMP phosphodiesterase activity"/>
    <property type="evidence" value="ECO:0007669"/>
    <property type="project" value="UniProtKB-EC"/>
</dbReference>
<dbReference type="GO" id="GO:0030553">
    <property type="term" value="F:cGMP binding"/>
    <property type="evidence" value="ECO:0007669"/>
    <property type="project" value="InterPro"/>
</dbReference>
<dbReference type="GO" id="GO:0030507">
    <property type="term" value="F:spectrin binding"/>
    <property type="evidence" value="ECO:0000266"/>
    <property type="project" value="MGI"/>
</dbReference>
<dbReference type="GO" id="GO:0045742">
    <property type="term" value="P:positive regulation of epidermal growth factor receptor signaling pathway"/>
    <property type="evidence" value="ECO:0000314"/>
    <property type="project" value="MGI"/>
</dbReference>
<dbReference type="GO" id="GO:0045745">
    <property type="term" value="P:positive regulation of G protein-coupled receptor signaling pathway"/>
    <property type="evidence" value="ECO:0000314"/>
    <property type="project" value="MGI"/>
</dbReference>
<dbReference type="GO" id="GO:0043410">
    <property type="term" value="P:positive regulation of MAPK cascade"/>
    <property type="evidence" value="ECO:0000314"/>
    <property type="project" value="MGI"/>
</dbReference>
<dbReference type="GO" id="GO:0007601">
    <property type="term" value="P:visual perception"/>
    <property type="evidence" value="ECO:0007669"/>
    <property type="project" value="UniProtKB-KW"/>
</dbReference>
<dbReference type="FunFam" id="4.10.1120.10:FF:000001">
    <property type="entry name" value="retinal rod rhodopsin-sensitive cGMP 3',5'-cyclic phosphodiesterase subunit gamma"/>
    <property type="match status" value="1"/>
</dbReference>
<dbReference type="Gene3D" id="4.10.1120.10">
    <property type="entry name" value="Retinal cGMP phosphodiesterase, gamma subunit"/>
    <property type="match status" value="1"/>
</dbReference>
<dbReference type="InterPro" id="IPR006952">
    <property type="entry name" value="PDE6_gamma"/>
</dbReference>
<dbReference type="InterPro" id="IPR037030">
    <property type="entry name" value="PDE6_gamma_sf"/>
</dbReference>
<dbReference type="PANTHER" id="PTHR12122">
    <property type="entry name" value="RETINAL CONE RHODOPSIN-SENSITIVE CGMP 3',5'-CYCLIC PHOSPHODIESTERASE GAMMA-SUBUNIT-RELATED"/>
    <property type="match status" value="1"/>
</dbReference>
<dbReference type="PANTHER" id="PTHR12122:SF4">
    <property type="entry name" value="RETINAL ROD RHODOPSIN-SENSITIVE CGMP 3',5'-CYCLIC PHOSPHODIESTERASE SUBUNIT GAMMA"/>
    <property type="match status" value="1"/>
</dbReference>
<dbReference type="Pfam" id="PF04868">
    <property type="entry name" value="PDE6_gamma"/>
    <property type="match status" value="1"/>
</dbReference>
<dbReference type="PIRSF" id="PIRSF000969">
    <property type="entry name" value="35-cGMP_Pdiase_g"/>
    <property type="match status" value="1"/>
</dbReference>
<accession>P09174</accession>
<organism>
    <name type="scientific">Mus musculus</name>
    <name type="common">Mouse</name>
    <dbReference type="NCBI Taxonomy" id="10090"/>
    <lineage>
        <taxon>Eukaryota</taxon>
        <taxon>Metazoa</taxon>
        <taxon>Chordata</taxon>
        <taxon>Craniata</taxon>
        <taxon>Vertebrata</taxon>
        <taxon>Euteleostomi</taxon>
        <taxon>Mammalia</taxon>
        <taxon>Eutheria</taxon>
        <taxon>Euarchontoglires</taxon>
        <taxon>Glires</taxon>
        <taxon>Rodentia</taxon>
        <taxon>Myomorpha</taxon>
        <taxon>Muroidea</taxon>
        <taxon>Muridae</taxon>
        <taxon>Murinae</taxon>
        <taxon>Mus</taxon>
        <taxon>Mus</taxon>
    </lineage>
</organism>
<proteinExistence type="inferred from homology"/>
<sequence>MNLEPPKGEIRSATRVIGGPVTPRKGPPKFKQRQTRQFKSKPPKKGVQGFGDDIPGMEGLGTDITVICPWEAFNHLELHELAQYGII</sequence>
<reference key="1">
    <citation type="journal article" date="1988" name="FEBS Lett.">
        <title>Gamma-subunit of mouse retinal cyclic-GMP phosphodiesterase: cDNA and corresponding amino acid sequence.</title>
        <authorList>
            <person name="Tuteja N."/>
            <person name="Farber D.B."/>
        </authorList>
    </citation>
    <scope>NUCLEOTIDE SEQUENCE [MRNA]</scope>
    <scope>INVOLVEMENT IN BLINDNESS</scope>
    <source>
        <tissue>Retina</tissue>
    </source>
</reference>
<reference key="2">
    <citation type="journal article" date="2004" name="Genome Res.">
        <title>The status, quality, and expansion of the NIH full-length cDNA project: the Mammalian Gene Collection (MGC).</title>
        <authorList>
            <consortium name="The MGC Project Team"/>
        </authorList>
    </citation>
    <scope>NUCLEOTIDE SEQUENCE [LARGE SCALE MRNA]</scope>
    <source>
        <tissue>Eye</tissue>
    </source>
</reference>
<gene>
    <name type="primary">Pde6g</name>
    <name type="synonym">Pdeg</name>
</gene>
<comment type="function">
    <text>Participates in processes of transmission and amplification of the visual signal. cGMP-PDEs are the effector molecules in G-protein-mediated phototransduction in vertebrate rods and cones.</text>
</comment>
<comment type="catalytic activity">
    <reaction>
        <text>3',5'-cyclic GMP + H2O = GMP + H(+)</text>
        <dbReference type="Rhea" id="RHEA:16957"/>
        <dbReference type="ChEBI" id="CHEBI:15377"/>
        <dbReference type="ChEBI" id="CHEBI:15378"/>
        <dbReference type="ChEBI" id="CHEBI:57746"/>
        <dbReference type="ChEBI" id="CHEBI:58115"/>
        <dbReference type="EC" id="3.1.4.35"/>
    </reaction>
</comment>
<comment type="subunit">
    <text>Oligomer composed of two catalytic chains (alpha and beta), an inhibitory chain (gamma) and the delta chain.</text>
</comment>
<comment type="disease">
    <text evidence="3">Deficiency in GMP-PDE activity cause accumulation of cGMP in visual cells. The elevated cGMP levels are associated with degeneration of the photoreceptors and blindness.</text>
</comment>
<comment type="similarity">
    <text evidence="4">Belongs to the rod/cone cGMP-PDE gamma subunit family.</text>
</comment>
<evidence type="ECO:0000250" key="1">
    <source>
        <dbReference type="UniProtKB" id="P04972"/>
    </source>
</evidence>
<evidence type="ECO:0000256" key="2">
    <source>
        <dbReference type="SAM" id="MobiDB-lite"/>
    </source>
</evidence>
<evidence type="ECO:0000303" key="3">
    <source>
    </source>
</evidence>
<evidence type="ECO:0000305" key="4"/>
<name>CNRG_MOUSE</name>
<protein>
    <recommendedName>
        <fullName>Retinal rod rhodopsin-sensitive cGMP 3',5'-cyclic phosphodiesterase subunit gamma</fullName>
        <shortName>GMP-PDE gamma</shortName>
        <ecNumber>3.1.4.35</ecNumber>
    </recommendedName>
</protein>